<feature type="chain" id="PRO_1000087109" description="Large ribosomal subunit protein uL13">
    <location>
        <begin position="1"/>
        <end position="145"/>
    </location>
</feature>
<proteinExistence type="inferred from homology"/>
<organism>
    <name type="scientific">Staphylococcus aureus (strain JH9)</name>
    <dbReference type="NCBI Taxonomy" id="359786"/>
    <lineage>
        <taxon>Bacteria</taxon>
        <taxon>Bacillati</taxon>
        <taxon>Bacillota</taxon>
        <taxon>Bacilli</taxon>
        <taxon>Bacillales</taxon>
        <taxon>Staphylococcaceae</taxon>
        <taxon>Staphylococcus</taxon>
    </lineage>
</organism>
<gene>
    <name evidence="1" type="primary">rplM</name>
    <name type="ordered locus">SaurJH9_2245</name>
</gene>
<comment type="function">
    <text evidence="1">This protein is one of the early assembly proteins of the 50S ribosomal subunit, although it is not seen to bind rRNA by itself. It is important during the early stages of 50S assembly.</text>
</comment>
<comment type="subunit">
    <text evidence="1">Part of the 50S ribosomal subunit.</text>
</comment>
<comment type="similarity">
    <text evidence="1">Belongs to the universal ribosomal protein uL13 family.</text>
</comment>
<reference key="1">
    <citation type="submission" date="2007-05" db="EMBL/GenBank/DDBJ databases">
        <title>Complete sequence of chromosome of Staphylococcus aureus subsp. aureus JH9.</title>
        <authorList>
            <consortium name="US DOE Joint Genome Institute"/>
            <person name="Copeland A."/>
            <person name="Lucas S."/>
            <person name="Lapidus A."/>
            <person name="Barry K."/>
            <person name="Detter J.C."/>
            <person name="Glavina del Rio T."/>
            <person name="Hammon N."/>
            <person name="Israni S."/>
            <person name="Pitluck S."/>
            <person name="Chain P."/>
            <person name="Malfatti S."/>
            <person name="Shin M."/>
            <person name="Vergez L."/>
            <person name="Schmutz J."/>
            <person name="Larimer F."/>
            <person name="Land M."/>
            <person name="Hauser L."/>
            <person name="Kyrpides N."/>
            <person name="Kim E."/>
            <person name="Tomasz A."/>
            <person name="Richardson P."/>
        </authorList>
    </citation>
    <scope>NUCLEOTIDE SEQUENCE [LARGE SCALE GENOMIC DNA]</scope>
    <source>
        <strain>JH9</strain>
    </source>
</reference>
<evidence type="ECO:0000255" key="1">
    <source>
        <dbReference type="HAMAP-Rule" id="MF_01366"/>
    </source>
</evidence>
<evidence type="ECO:0000305" key="2"/>
<accession>A5IV02</accession>
<keyword id="KW-0687">Ribonucleoprotein</keyword>
<keyword id="KW-0689">Ribosomal protein</keyword>
<sequence>MRQTFMANESNIERKWYVIDAEGQTLGRLSSEVASILRGKNKVTYTPHVDTGDYVIVINASKIEFTGNKETDKVYYRHSNHPGGIKSITAGELRRTNPERLIENSIKGMLPSTRLGEKQGKKLFVYGGAEHPHAAQQPENYELRG</sequence>
<protein>
    <recommendedName>
        <fullName evidence="1">Large ribosomal subunit protein uL13</fullName>
    </recommendedName>
    <alternativeName>
        <fullName evidence="2">50S ribosomal protein L13</fullName>
    </alternativeName>
</protein>
<name>RL13_STAA9</name>
<dbReference type="EMBL" id="CP000703">
    <property type="protein sequence ID" value="ABQ50025.1"/>
    <property type="molecule type" value="Genomic_DNA"/>
</dbReference>
<dbReference type="RefSeq" id="WP_001250038.1">
    <property type="nucleotide sequence ID" value="NC_009487.1"/>
</dbReference>
<dbReference type="SMR" id="A5IV02"/>
<dbReference type="GeneID" id="98346530"/>
<dbReference type="KEGG" id="saj:SaurJH9_2245"/>
<dbReference type="HOGENOM" id="CLU_082184_2_2_9"/>
<dbReference type="GO" id="GO:0022625">
    <property type="term" value="C:cytosolic large ribosomal subunit"/>
    <property type="evidence" value="ECO:0007669"/>
    <property type="project" value="TreeGrafter"/>
</dbReference>
<dbReference type="GO" id="GO:0003729">
    <property type="term" value="F:mRNA binding"/>
    <property type="evidence" value="ECO:0007669"/>
    <property type="project" value="TreeGrafter"/>
</dbReference>
<dbReference type="GO" id="GO:0003735">
    <property type="term" value="F:structural constituent of ribosome"/>
    <property type="evidence" value="ECO:0007669"/>
    <property type="project" value="InterPro"/>
</dbReference>
<dbReference type="GO" id="GO:0017148">
    <property type="term" value="P:negative regulation of translation"/>
    <property type="evidence" value="ECO:0007669"/>
    <property type="project" value="TreeGrafter"/>
</dbReference>
<dbReference type="GO" id="GO:0006412">
    <property type="term" value="P:translation"/>
    <property type="evidence" value="ECO:0007669"/>
    <property type="project" value="UniProtKB-UniRule"/>
</dbReference>
<dbReference type="CDD" id="cd00392">
    <property type="entry name" value="Ribosomal_L13"/>
    <property type="match status" value="1"/>
</dbReference>
<dbReference type="FunFam" id="3.90.1180.10:FF:000001">
    <property type="entry name" value="50S ribosomal protein L13"/>
    <property type="match status" value="1"/>
</dbReference>
<dbReference type="Gene3D" id="3.90.1180.10">
    <property type="entry name" value="Ribosomal protein L13"/>
    <property type="match status" value="1"/>
</dbReference>
<dbReference type="HAMAP" id="MF_01366">
    <property type="entry name" value="Ribosomal_uL13"/>
    <property type="match status" value="1"/>
</dbReference>
<dbReference type="InterPro" id="IPR005822">
    <property type="entry name" value="Ribosomal_uL13"/>
</dbReference>
<dbReference type="InterPro" id="IPR005823">
    <property type="entry name" value="Ribosomal_uL13_bac-type"/>
</dbReference>
<dbReference type="InterPro" id="IPR023563">
    <property type="entry name" value="Ribosomal_uL13_CS"/>
</dbReference>
<dbReference type="InterPro" id="IPR036899">
    <property type="entry name" value="Ribosomal_uL13_sf"/>
</dbReference>
<dbReference type="NCBIfam" id="TIGR01066">
    <property type="entry name" value="rplM_bact"/>
    <property type="match status" value="1"/>
</dbReference>
<dbReference type="PANTHER" id="PTHR11545:SF2">
    <property type="entry name" value="LARGE RIBOSOMAL SUBUNIT PROTEIN UL13M"/>
    <property type="match status" value="1"/>
</dbReference>
<dbReference type="PANTHER" id="PTHR11545">
    <property type="entry name" value="RIBOSOMAL PROTEIN L13"/>
    <property type="match status" value="1"/>
</dbReference>
<dbReference type="Pfam" id="PF00572">
    <property type="entry name" value="Ribosomal_L13"/>
    <property type="match status" value="1"/>
</dbReference>
<dbReference type="PIRSF" id="PIRSF002181">
    <property type="entry name" value="Ribosomal_L13"/>
    <property type="match status" value="1"/>
</dbReference>
<dbReference type="SUPFAM" id="SSF52161">
    <property type="entry name" value="Ribosomal protein L13"/>
    <property type="match status" value="1"/>
</dbReference>
<dbReference type="PROSITE" id="PS00783">
    <property type="entry name" value="RIBOSOMAL_L13"/>
    <property type="match status" value="1"/>
</dbReference>